<feature type="chain" id="PRO_1000080594" description="Na(+)-translocating NADH-quinone reductase subunit F">
    <location>
        <begin position="1"/>
        <end position="408"/>
    </location>
</feature>
<feature type="transmembrane region" description="Helical" evidence="1">
    <location>
        <begin position="4"/>
        <end position="24"/>
    </location>
</feature>
<feature type="domain" description="2Fe-2S ferredoxin-type" evidence="1">
    <location>
        <begin position="33"/>
        <end position="127"/>
    </location>
</feature>
<feature type="domain" description="FAD-binding FR-type" evidence="1">
    <location>
        <begin position="130"/>
        <end position="270"/>
    </location>
</feature>
<feature type="binding site" evidence="1">
    <location>
        <position position="70"/>
    </location>
    <ligand>
        <name>[2Fe-2S] cluster</name>
        <dbReference type="ChEBI" id="CHEBI:190135"/>
    </ligand>
</feature>
<feature type="binding site" evidence="1">
    <location>
        <position position="76"/>
    </location>
    <ligand>
        <name>[2Fe-2S] cluster</name>
        <dbReference type="ChEBI" id="CHEBI:190135"/>
    </ligand>
</feature>
<feature type="binding site" evidence="1">
    <location>
        <position position="79"/>
    </location>
    <ligand>
        <name>[2Fe-2S] cluster</name>
        <dbReference type="ChEBI" id="CHEBI:190135"/>
    </ligand>
</feature>
<feature type="binding site" evidence="1">
    <location>
        <position position="111"/>
    </location>
    <ligand>
        <name>[2Fe-2S] cluster</name>
        <dbReference type="ChEBI" id="CHEBI:190135"/>
    </ligand>
</feature>
<proteinExistence type="inferred from homology"/>
<organism>
    <name type="scientific">Shewanella denitrificans (strain OS217 / ATCC BAA-1090 / DSM 15013)</name>
    <dbReference type="NCBI Taxonomy" id="318161"/>
    <lineage>
        <taxon>Bacteria</taxon>
        <taxon>Pseudomonadati</taxon>
        <taxon>Pseudomonadota</taxon>
        <taxon>Gammaproteobacteria</taxon>
        <taxon>Alteromonadales</taxon>
        <taxon>Shewanellaceae</taxon>
        <taxon>Shewanella</taxon>
    </lineage>
</organism>
<protein>
    <recommendedName>
        <fullName evidence="1">Na(+)-translocating NADH-quinone reductase subunit F</fullName>
        <shortName evidence="1">Na(+)-NQR subunit F</shortName>
        <shortName evidence="1">Na(+)-translocating NQR subunit F</shortName>
        <ecNumber evidence="1">7.2.1.1</ecNumber>
    </recommendedName>
    <alternativeName>
        <fullName evidence="1">NQR complex subunit F</fullName>
    </alternativeName>
    <alternativeName>
        <fullName evidence="1">NQR-1 subunit F</fullName>
    </alternativeName>
</protein>
<comment type="function">
    <text evidence="1">NQR complex catalyzes the reduction of ubiquinone-1 to ubiquinol by two successive reactions, coupled with the transport of Na(+) ions from the cytoplasm to the periplasm. The first step is catalyzed by NqrF, which accepts electrons from NADH and reduces ubiquinone-1 to ubisemiquinone by a one-electron transfer pathway.</text>
</comment>
<comment type="catalytic activity">
    <reaction evidence="1">
        <text>a ubiquinone + n Na(+)(in) + NADH + H(+) = a ubiquinol + n Na(+)(out) + NAD(+)</text>
        <dbReference type="Rhea" id="RHEA:47748"/>
        <dbReference type="Rhea" id="RHEA-COMP:9565"/>
        <dbReference type="Rhea" id="RHEA-COMP:9566"/>
        <dbReference type="ChEBI" id="CHEBI:15378"/>
        <dbReference type="ChEBI" id="CHEBI:16389"/>
        <dbReference type="ChEBI" id="CHEBI:17976"/>
        <dbReference type="ChEBI" id="CHEBI:29101"/>
        <dbReference type="ChEBI" id="CHEBI:57540"/>
        <dbReference type="ChEBI" id="CHEBI:57945"/>
        <dbReference type="EC" id="7.2.1.1"/>
    </reaction>
</comment>
<comment type="cofactor">
    <cofactor evidence="1">
        <name>[2Fe-2S] cluster</name>
        <dbReference type="ChEBI" id="CHEBI:190135"/>
    </cofactor>
    <text evidence="1">Binds 1 [2Fe-2S] cluster.</text>
</comment>
<comment type="cofactor">
    <cofactor evidence="1">
        <name>FAD</name>
        <dbReference type="ChEBI" id="CHEBI:57692"/>
    </cofactor>
</comment>
<comment type="subunit">
    <text evidence="1">Composed of six subunits; NqrA, NqrB, NqrC, NqrD, NqrE and NqrF.</text>
</comment>
<comment type="subcellular location">
    <subcellularLocation>
        <location evidence="1">Cell inner membrane</location>
        <topology evidence="1">Single-pass membrane protein</topology>
    </subcellularLocation>
</comment>
<comment type="similarity">
    <text evidence="1">Belongs to the NqrF family.</text>
</comment>
<keyword id="KW-0001">2Fe-2S</keyword>
<keyword id="KW-0997">Cell inner membrane</keyword>
<keyword id="KW-1003">Cell membrane</keyword>
<keyword id="KW-0274">FAD</keyword>
<keyword id="KW-0285">Flavoprotein</keyword>
<keyword id="KW-0406">Ion transport</keyword>
<keyword id="KW-0408">Iron</keyword>
<keyword id="KW-0411">Iron-sulfur</keyword>
<keyword id="KW-0472">Membrane</keyword>
<keyword id="KW-0479">Metal-binding</keyword>
<keyword id="KW-0520">NAD</keyword>
<keyword id="KW-1185">Reference proteome</keyword>
<keyword id="KW-0915">Sodium</keyword>
<keyword id="KW-0739">Sodium transport</keyword>
<keyword id="KW-1278">Translocase</keyword>
<keyword id="KW-0812">Transmembrane</keyword>
<keyword id="KW-1133">Transmembrane helix</keyword>
<keyword id="KW-0813">Transport</keyword>
<keyword id="KW-0830">Ubiquinone</keyword>
<reference key="1">
    <citation type="submission" date="2006-03" db="EMBL/GenBank/DDBJ databases">
        <title>Complete sequence of Shewanella denitrificans OS217.</title>
        <authorList>
            <consortium name="US DOE Joint Genome Institute"/>
            <person name="Copeland A."/>
            <person name="Lucas S."/>
            <person name="Lapidus A."/>
            <person name="Barry K."/>
            <person name="Detter J.C."/>
            <person name="Glavina del Rio T."/>
            <person name="Hammon N."/>
            <person name="Israni S."/>
            <person name="Dalin E."/>
            <person name="Tice H."/>
            <person name="Pitluck S."/>
            <person name="Brettin T."/>
            <person name="Bruce D."/>
            <person name="Han C."/>
            <person name="Tapia R."/>
            <person name="Gilna P."/>
            <person name="Kiss H."/>
            <person name="Schmutz J."/>
            <person name="Larimer F."/>
            <person name="Land M."/>
            <person name="Hauser L."/>
            <person name="Kyrpides N."/>
            <person name="Lykidis A."/>
            <person name="Richardson P."/>
        </authorList>
    </citation>
    <scope>NUCLEOTIDE SEQUENCE [LARGE SCALE GENOMIC DNA]</scope>
    <source>
        <strain>OS217 / ATCC BAA-1090 / DSM 15013</strain>
    </source>
</reference>
<name>NQRF_SHEDO</name>
<accession>Q12QK1</accession>
<evidence type="ECO:0000255" key="1">
    <source>
        <dbReference type="HAMAP-Rule" id="MF_00430"/>
    </source>
</evidence>
<gene>
    <name evidence="1" type="primary">nqrF</name>
    <name type="ordered locus">Sden_0987</name>
</gene>
<dbReference type="EC" id="7.2.1.1" evidence="1"/>
<dbReference type="EMBL" id="CP000302">
    <property type="protein sequence ID" value="ABE54275.1"/>
    <property type="molecule type" value="Genomic_DNA"/>
</dbReference>
<dbReference type="RefSeq" id="WP_011495439.1">
    <property type="nucleotide sequence ID" value="NC_007954.1"/>
</dbReference>
<dbReference type="SMR" id="Q12QK1"/>
<dbReference type="STRING" id="318161.Sden_0987"/>
<dbReference type="KEGG" id="sdn:Sden_0987"/>
<dbReference type="eggNOG" id="COG2871">
    <property type="taxonomic scope" value="Bacteria"/>
</dbReference>
<dbReference type="HOGENOM" id="CLU_003827_7_2_6"/>
<dbReference type="OrthoDB" id="9806195at2"/>
<dbReference type="Proteomes" id="UP000001982">
    <property type="component" value="Chromosome"/>
</dbReference>
<dbReference type="GO" id="GO:0005886">
    <property type="term" value="C:plasma membrane"/>
    <property type="evidence" value="ECO:0007669"/>
    <property type="project" value="UniProtKB-SubCell"/>
</dbReference>
<dbReference type="GO" id="GO:0051537">
    <property type="term" value="F:2 iron, 2 sulfur cluster binding"/>
    <property type="evidence" value="ECO:0007669"/>
    <property type="project" value="UniProtKB-KW"/>
</dbReference>
<dbReference type="GO" id="GO:0009055">
    <property type="term" value="F:electron transfer activity"/>
    <property type="evidence" value="ECO:0007669"/>
    <property type="project" value="UniProtKB-UniRule"/>
</dbReference>
<dbReference type="GO" id="GO:0046872">
    <property type="term" value="F:metal ion binding"/>
    <property type="evidence" value="ECO:0007669"/>
    <property type="project" value="UniProtKB-KW"/>
</dbReference>
<dbReference type="GO" id="GO:0016655">
    <property type="term" value="F:oxidoreductase activity, acting on NAD(P)H, quinone or similar compound as acceptor"/>
    <property type="evidence" value="ECO:0007669"/>
    <property type="project" value="InterPro"/>
</dbReference>
<dbReference type="GO" id="GO:0006814">
    <property type="term" value="P:sodium ion transport"/>
    <property type="evidence" value="ECO:0007669"/>
    <property type="project" value="UniProtKB-UniRule"/>
</dbReference>
<dbReference type="CDD" id="cd06188">
    <property type="entry name" value="NADH_quinone_reductase"/>
    <property type="match status" value="1"/>
</dbReference>
<dbReference type="FunFam" id="2.40.30.10:FF:000064">
    <property type="entry name" value="Na(+)-translocating NADH-quinone reductase subunit F"/>
    <property type="match status" value="1"/>
</dbReference>
<dbReference type="FunFam" id="3.40.50.80:FF:000014">
    <property type="entry name" value="Na(+)-translocating NADH-quinone reductase subunit F"/>
    <property type="match status" value="1"/>
</dbReference>
<dbReference type="Gene3D" id="3.10.20.30">
    <property type="match status" value="1"/>
</dbReference>
<dbReference type="Gene3D" id="3.40.50.80">
    <property type="entry name" value="Nucleotide-binding domain of ferredoxin-NADP reductase (FNR) module"/>
    <property type="match status" value="1"/>
</dbReference>
<dbReference type="Gene3D" id="2.40.30.10">
    <property type="entry name" value="Translation factors"/>
    <property type="match status" value="1"/>
</dbReference>
<dbReference type="HAMAP" id="MF_00430">
    <property type="entry name" value="NqrF"/>
    <property type="match status" value="1"/>
</dbReference>
<dbReference type="InterPro" id="IPR036010">
    <property type="entry name" value="2Fe-2S_ferredoxin-like_sf"/>
</dbReference>
<dbReference type="InterPro" id="IPR001041">
    <property type="entry name" value="2Fe-2S_ferredoxin-type"/>
</dbReference>
<dbReference type="InterPro" id="IPR012675">
    <property type="entry name" value="Beta-grasp_dom_sf"/>
</dbReference>
<dbReference type="InterPro" id="IPR008333">
    <property type="entry name" value="Cbr1-like_FAD-bd_dom"/>
</dbReference>
<dbReference type="InterPro" id="IPR017927">
    <property type="entry name" value="FAD-bd_FR_type"/>
</dbReference>
<dbReference type="InterPro" id="IPR001709">
    <property type="entry name" value="Flavoprot_Pyr_Nucl_cyt_Rdtase"/>
</dbReference>
<dbReference type="InterPro" id="IPR039261">
    <property type="entry name" value="FNR_nucleotide-bd"/>
</dbReference>
<dbReference type="InterPro" id="IPR010205">
    <property type="entry name" value="NqrF"/>
</dbReference>
<dbReference type="InterPro" id="IPR001433">
    <property type="entry name" value="OxRdtase_FAD/NAD-bd"/>
</dbReference>
<dbReference type="InterPro" id="IPR017938">
    <property type="entry name" value="Riboflavin_synthase-like_b-brl"/>
</dbReference>
<dbReference type="NCBIfam" id="TIGR01941">
    <property type="entry name" value="nqrF"/>
    <property type="match status" value="1"/>
</dbReference>
<dbReference type="PANTHER" id="PTHR43644">
    <property type="entry name" value="NA(+)-TRANSLOCATING NADH-QUINONE REDUCTASE SUBUNIT"/>
    <property type="match status" value="1"/>
</dbReference>
<dbReference type="PANTHER" id="PTHR43644:SF1">
    <property type="entry name" value="NAD(P)H-FLAVIN REDUCTASE"/>
    <property type="match status" value="1"/>
</dbReference>
<dbReference type="Pfam" id="PF00970">
    <property type="entry name" value="FAD_binding_6"/>
    <property type="match status" value="1"/>
</dbReference>
<dbReference type="Pfam" id="PF00111">
    <property type="entry name" value="Fer2"/>
    <property type="match status" value="1"/>
</dbReference>
<dbReference type="Pfam" id="PF00175">
    <property type="entry name" value="NAD_binding_1"/>
    <property type="match status" value="1"/>
</dbReference>
<dbReference type="PIRSF" id="PIRSF000044">
    <property type="entry name" value="Cis_Diol_DH_RD"/>
    <property type="match status" value="1"/>
</dbReference>
<dbReference type="PRINTS" id="PR00371">
    <property type="entry name" value="FPNCR"/>
</dbReference>
<dbReference type="SUPFAM" id="SSF54292">
    <property type="entry name" value="2Fe-2S ferredoxin-like"/>
    <property type="match status" value="1"/>
</dbReference>
<dbReference type="SUPFAM" id="SSF52343">
    <property type="entry name" value="Ferredoxin reductase-like, C-terminal NADP-linked domain"/>
    <property type="match status" value="1"/>
</dbReference>
<dbReference type="SUPFAM" id="SSF63380">
    <property type="entry name" value="Riboflavin synthase domain-like"/>
    <property type="match status" value="1"/>
</dbReference>
<dbReference type="PROSITE" id="PS51085">
    <property type="entry name" value="2FE2S_FER_2"/>
    <property type="match status" value="1"/>
</dbReference>
<dbReference type="PROSITE" id="PS51384">
    <property type="entry name" value="FAD_FR"/>
    <property type="match status" value="1"/>
</dbReference>
<sequence>MLEVYLGVGMFTAIVLVLVLVILFAKSKLVASGDIIIGINGDADKAITTGAGGKLLSVLADNGIFVSSACGGGGSCGQCRVNIKSGGGDILPTELDHISKGEARGGCRLSCQVNVKSDMEIELDEEIFGIKKWECDVISNDNKATFIKELKLQIPDGESVPFRAGGYIQIEAPAHHVKYADFDVPAKYRGDWEHFGFFKLESKVDEETIRAYSMANYPEEFGIIMLNVRIATPPPRNLSLPCGKMSSYIWSLKAGDKVTISGPFGEFFAKDTDAEMVFIGGGAGMAPMRSHLFDQLKRLKSKRKMSFWYGARSKREMFYVEDFDGLAAENENFQWHVALSDPQAEDEWTGYTGFIHNVLYENYLRDHDAPEDCEFYMCGPPMMNAAVISMLKDLGVEDENILLDDFGG</sequence>